<reference key="1">
    <citation type="journal article" date="2007" name="PLoS Genet.">
        <title>Patterns and implications of gene gain and loss in the evolution of Prochlorococcus.</title>
        <authorList>
            <person name="Kettler G.C."/>
            <person name="Martiny A.C."/>
            <person name="Huang K."/>
            <person name="Zucker J."/>
            <person name="Coleman M.L."/>
            <person name="Rodrigue S."/>
            <person name="Chen F."/>
            <person name="Lapidus A."/>
            <person name="Ferriera S."/>
            <person name="Johnson J."/>
            <person name="Steglich C."/>
            <person name="Church G.M."/>
            <person name="Richardson P."/>
            <person name="Chisholm S.W."/>
        </authorList>
    </citation>
    <scope>NUCLEOTIDE SEQUENCE [LARGE SCALE GENOMIC DNA]</scope>
    <source>
        <strain>MIT 9515</strain>
    </source>
</reference>
<accession>A2BVN3</accession>
<protein>
    <recommendedName>
        <fullName evidence="1">NAD(P)H-quinone oxidoreductase subunit L</fullName>
        <ecNumber evidence="1">7.1.1.-</ecNumber>
    </recommendedName>
    <alternativeName>
        <fullName evidence="1">NAD(P)H dehydrogenase I subunit L</fullName>
    </alternativeName>
    <alternativeName>
        <fullName>NDH-1 subunit L</fullName>
    </alternativeName>
    <alternativeName>
        <fullName>NDH-L</fullName>
    </alternativeName>
</protein>
<keyword id="KW-0472">Membrane</keyword>
<keyword id="KW-0520">NAD</keyword>
<keyword id="KW-0521">NADP</keyword>
<keyword id="KW-0618">Plastoquinone</keyword>
<keyword id="KW-0874">Quinone</keyword>
<keyword id="KW-0793">Thylakoid</keyword>
<keyword id="KW-1278">Translocase</keyword>
<keyword id="KW-0812">Transmembrane</keyword>
<keyword id="KW-1133">Transmembrane helix</keyword>
<keyword id="KW-0813">Transport</keyword>
<sequence>MESILNNSVITFVAYVGIISIYLFVIPLILFYWMNNRWNVMGKLERLGVYGLVFLFFPGLILFSPFLNLRLRGNNEG</sequence>
<comment type="function">
    <text evidence="1">NDH-1 shuttles electrons from an unknown electron donor, via FMN and iron-sulfur (Fe-S) centers, to quinones in the respiratory and/or the photosynthetic chain. The immediate electron acceptor for the enzyme in this species is believed to be plastoquinone. Couples the redox reaction to proton translocation, and thus conserves the redox energy in a proton gradient. Cyanobacterial NDH-1 also plays a role in inorganic carbon-concentration.</text>
</comment>
<comment type="catalytic activity">
    <reaction evidence="1">
        <text>a plastoquinone + NADH + (n+1) H(+)(in) = a plastoquinol + NAD(+) + n H(+)(out)</text>
        <dbReference type="Rhea" id="RHEA:42608"/>
        <dbReference type="Rhea" id="RHEA-COMP:9561"/>
        <dbReference type="Rhea" id="RHEA-COMP:9562"/>
        <dbReference type="ChEBI" id="CHEBI:15378"/>
        <dbReference type="ChEBI" id="CHEBI:17757"/>
        <dbReference type="ChEBI" id="CHEBI:57540"/>
        <dbReference type="ChEBI" id="CHEBI:57945"/>
        <dbReference type="ChEBI" id="CHEBI:62192"/>
    </reaction>
</comment>
<comment type="catalytic activity">
    <reaction evidence="1">
        <text>a plastoquinone + NADPH + (n+1) H(+)(in) = a plastoquinol + NADP(+) + n H(+)(out)</text>
        <dbReference type="Rhea" id="RHEA:42612"/>
        <dbReference type="Rhea" id="RHEA-COMP:9561"/>
        <dbReference type="Rhea" id="RHEA-COMP:9562"/>
        <dbReference type="ChEBI" id="CHEBI:15378"/>
        <dbReference type="ChEBI" id="CHEBI:17757"/>
        <dbReference type="ChEBI" id="CHEBI:57783"/>
        <dbReference type="ChEBI" id="CHEBI:58349"/>
        <dbReference type="ChEBI" id="CHEBI:62192"/>
    </reaction>
</comment>
<comment type="subunit">
    <text evidence="1">NDH-1 can be composed of about 15 different subunits; different subcomplexes with different compositions have been identified which probably have different functions.</text>
</comment>
<comment type="subcellular location">
    <subcellularLocation>
        <location evidence="1">Cellular thylakoid membrane</location>
        <topology evidence="1">Multi-pass membrane protein</topology>
    </subcellularLocation>
</comment>
<comment type="similarity">
    <text evidence="1">Belongs to the complex I NdhL subunit family.</text>
</comment>
<gene>
    <name evidence="1" type="primary">ndhL</name>
    <name type="ordered locus">P9515_06351</name>
</gene>
<organism>
    <name type="scientific">Prochlorococcus marinus (strain MIT 9515)</name>
    <dbReference type="NCBI Taxonomy" id="167542"/>
    <lineage>
        <taxon>Bacteria</taxon>
        <taxon>Bacillati</taxon>
        <taxon>Cyanobacteriota</taxon>
        <taxon>Cyanophyceae</taxon>
        <taxon>Synechococcales</taxon>
        <taxon>Prochlorococcaceae</taxon>
        <taxon>Prochlorococcus</taxon>
    </lineage>
</organism>
<dbReference type="EC" id="7.1.1.-" evidence="1"/>
<dbReference type="EMBL" id="CP000552">
    <property type="protein sequence ID" value="ABM71844.1"/>
    <property type="molecule type" value="Genomic_DNA"/>
</dbReference>
<dbReference type="RefSeq" id="WP_011819949.1">
    <property type="nucleotide sequence ID" value="NC_008817.1"/>
</dbReference>
<dbReference type="SMR" id="A2BVN3"/>
<dbReference type="STRING" id="167542.P9515_06351"/>
<dbReference type="GeneID" id="60201488"/>
<dbReference type="KEGG" id="pmc:P9515_06351"/>
<dbReference type="eggNOG" id="ENOG5030RAT">
    <property type="taxonomic scope" value="Bacteria"/>
</dbReference>
<dbReference type="HOGENOM" id="CLU_171077_1_0_3"/>
<dbReference type="OrthoDB" id="517549at2"/>
<dbReference type="Proteomes" id="UP000001589">
    <property type="component" value="Chromosome"/>
</dbReference>
<dbReference type="GO" id="GO:0031676">
    <property type="term" value="C:plasma membrane-derived thylakoid membrane"/>
    <property type="evidence" value="ECO:0007669"/>
    <property type="project" value="UniProtKB-SubCell"/>
</dbReference>
<dbReference type="GO" id="GO:0016655">
    <property type="term" value="F:oxidoreductase activity, acting on NAD(P)H, quinone or similar compound as acceptor"/>
    <property type="evidence" value="ECO:0007669"/>
    <property type="project" value="UniProtKB-UniRule"/>
</dbReference>
<dbReference type="GO" id="GO:0048038">
    <property type="term" value="F:quinone binding"/>
    <property type="evidence" value="ECO:0007669"/>
    <property type="project" value="UniProtKB-KW"/>
</dbReference>
<dbReference type="HAMAP" id="MF_01355">
    <property type="entry name" value="NDH1_NDH1L"/>
    <property type="match status" value="1"/>
</dbReference>
<dbReference type="InterPro" id="IPR019654">
    <property type="entry name" value="NADH-quinone_OxRdatse_su_L"/>
</dbReference>
<dbReference type="PANTHER" id="PTHR36727">
    <property type="entry name" value="NAD(P)H-QUINONE OXIDOREDUCTASE SUBUNIT L, CHLOROPLASTIC"/>
    <property type="match status" value="1"/>
</dbReference>
<dbReference type="PANTHER" id="PTHR36727:SF2">
    <property type="entry name" value="NAD(P)H-QUINONE OXIDOREDUCTASE SUBUNIT L, CHLOROPLASTIC"/>
    <property type="match status" value="1"/>
</dbReference>
<dbReference type="Pfam" id="PF10716">
    <property type="entry name" value="NdhL"/>
    <property type="match status" value="1"/>
</dbReference>
<feature type="chain" id="PRO_0000353679" description="NAD(P)H-quinone oxidoreductase subunit L">
    <location>
        <begin position="1"/>
        <end position="77"/>
    </location>
</feature>
<feature type="transmembrane region" description="Helical" evidence="1">
    <location>
        <begin position="12"/>
        <end position="32"/>
    </location>
</feature>
<feature type="transmembrane region" description="Helical" evidence="1">
    <location>
        <begin position="47"/>
        <end position="67"/>
    </location>
</feature>
<evidence type="ECO:0000255" key="1">
    <source>
        <dbReference type="HAMAP-Rule" id="MF_01355"/>
    </source>
</evidence>
<proteinExistence type="inferred from homology"/>
<name>NDHL_PROM5</name>